<gene>
    <name evidence="1" type="primary">napA</name>
    <name type="ordered locus">Cla_1018</name>
</gene>
<keyword id="KW-0004">4Fe-4S</keyword>
<keyword id="KW-0249">Electron transport</keyword>
<keyword id="KW-0408">Iron</keyword>
<keyword id="KW-0411">Iron-sulfur</keyword>
<keyword id="KW-0479">Metal-binding</keyword>
<keyword id="KW-0500">Molybdenum</keyword>
<keyword id="KW-0534">Nitrate assimilation</keyword>
<keyword id="KW-0560">Oxidoreductase</keyword>
<keyword id="KW-0574">Periplasm</keyword>
<keyword id="KW-1185">Reference proteome</keyword>
<keyword id="KW-0732">Signal</keyword>
<keyword id="KW-0813">Transport</keyword>
<comment type="function">
    <text evidence="1">Catalytic subunit of the periplasmic nitrate reductase complex NapAB. Receives electrons from NapB and catalyzes the reduction of nitrate to nitrite.</text>
</comment>
<comment type="catalytic activity">
    <reaction evidence="1">
        <text>2 Fe(II)-[cytochrome] + nitrate + 2 H(+) = 2 Fe(III)-[cytochrome] + nitrite + H2O</text>
        <dbReference type="Rhea" id="RHEA:12909"/>
        <dbReference type="Rhea" id="RHEA-COMP:11777"/>
        <dbReference type="Rhea" id="RHEA-COMP:11778"/>
        <dbReference type="ChEBI" id="CHEBI:15377"/>
        <dbReference type="ChEBI" id="CHEBI:15378"/>
        <dbReference type="ChEBI" id="CHEBI:16301"/>
        <dbReference type="ChEBI" id="CHEBI:17632"/>
        <dbReference type="ChEBI" id="CHEBI:29033"/>
        <dbReference type="ChEBI" id="CHEBI:29034"/>
        <dbReference type="EC" id="1.9.6.1"/>
    </reaction>
</comment>
<comment type="cofactor">
    <cofactor evidence="1">
        <name>[4Fe-4S] cluster</name>
        <dbReference type="ChEBI" id="CHEBI:49883"/>
    </cofactor>
    <text evidence="1">Binds 1 [4Fe-4S] cluster.</text>
</comment>
<comment type="cofactor">
    <cofactor evidence="1">
        <name>Mo-bis(molybdopterin guanine dinucleotide)</name>
        <dbReference type="ChEBI" id="CHEBI:60539"/>
    </cofactor>
    <text evidence="1">Binds 1 molybdenum-bis(molybdopterin guanine dinucleotide) (Mo-bis-MGD) cofactor per subunit.</text>
</comment>
<comment type="subunit">
    <text evidence="1">Component of the periplasmic nitrate reductase NapAB complex composed of NapA and NapB.</text>
</comment>
<comment type="subcellular location">
    <subcellularLocation>
        <location evidence="1">Periplasm</location>
    </subcellularLocation>
</comment>
<comment type="PTM">
    <text evidence="1">Predicted to be exported by the Tat system. The position of the signal peptide cleavage has not been experimentally proven.</text>
</comment>
<comment type="similarity">
    <text evidence="1">Belongs to the prokaryotic molybdopterin-containing oxidoreductase family. NasA/NapA/NarB subfamily.</text>
</comment>
<dbReference type="EC" id="1.9.6.1" evidence="1"/>
<dbReference type="EMBL" id="CP000932">
    <property type="protein sequence ID" value="ACM64341.1"/>
    <property type="molecule type" value="Genomic_DNA"/>
</dbReference>
<dbReference type="RefSeq" id="WP_012661724.1">
    <property type="nucleotide sequence ID" value="NC_012039.1"/>
</dbReference>
<dbReference type="SMR" id="B9KCQ2"/>
<dbReference type="STRING" id="306263.Cla_1018"/>
<dbReference type="KEGG" id="cla:CLA_1018"/>
<dbReference type="PATRIC" id="fig|306263.5.peg.1002"/>
<dbReference type="eggNOG" id="COG0243">
    <property type="taxonomic scope" value="Bacteria"/>
</dbReference>
<dbReference type="HOGENOM" id="CLU_000422_13_4_7"/>
<dbReference type="Proteomes" id="UP000007727">
    <property type="component" value="Chromosome"/>
</dbReference>
<dbReference type="GO" id="GO:0016020">
    <property type="term" value="C:membrane"/>
    <property type="evidence" value="ECO:0007669"/>
    <property type="project" value="TreeGrafter"/>
</dbReference>
<dbReference type="GO" id="GO:0009325">
    <property type="term" value="C:nitrate reductase complex"/>
    <property type="evidence" value="ECO:0007669"/>
    <property type="project" value="TreeGrafter"/>
</dbReference>
<dbReference type="GO" id="GO:0042597">
    <property type="term" value="C:periplasmic space"/>
    <property type="evidence" value="ECO:0007669"/>
    <property type="project" value="UniProtKB-SubCell"/>
</dbReference>
<dbReference type="GO" id="GO:0051539">
    <property type="term" value="F:4 iron, 4 sulfur cluster binding"/>
    <property type="evidence" value="ECO:0007669"/>
    <property type="project" value="UniProtKB-KW"/>
</dbReference>
<dbReference type="GO" id="GO:0009055">
    <property type="term" value="F:electron transfer activity"/>
    <property type="evidence" value="ECO:0007669"/>
    <property type="project" value="UniProtKB-UniRule"/>
</dbReference>
<dbReference type="GO" id="GO:0005506">
    <property type="term" value="F:iron ion binding"/>
    <property type="evidence" value="ECO:0007669"/>
    <property type="project" value="UniProtKB-UniRule"/>
</dbReference>
<dbReference type="GO" id="GO:0030151">
    <property type="term" value="F:molybdenum ion binding"/>
    <property type="evidence" value="ECO:0007669"/>
    <property type="project" value="InterPro"/>
</dbReference>
<dbReference type="GO" id="GO:0043546">
    <property type="term" value="F:molybdopterin cofactor binding"/>
    <property type="evidence" value="ECO:0007669"/>
    <property type="project" value="InterPro"/>
</dbReference>
<dbReference type="GO" id="GO:0050140">
    <property type="term" value="F:nitrate reductase (cytochrome) activity"/>
    <property type="evidence" value="ECO:0007669"/>
    <property type="project" value="UniProtKB-EC"/>
</dbReference>
<dbReference type="GO" id="GO:0006777">
    <property type="term" value="P:Mo-molybdopterin cofactor biosynthetic process"/>
    <property type="evidence" value="ECO:0007669"/>
    <property type="project" value="UniProtKB-UniRule"/>
</dbReference>
<dbReference type="GO" id="GO:0042128">
    <property type="term" value="P:nitrate assimilation"/>
    <property type="evidence" value="ECO:0007669"/>
    <property type="project" value="UniProtKB-UniRule"/>
</dbReference>
<dbReference type="CDD" id="cd02791">
    <property type="entry name" value="MopB_CT_Nitrate-R-NapA-like"/>
    <property type="match status" value="1"/>
</dbReference>
<dbReference type="FunFam" id="2.40.40.20:FF:000005">
    <property type="entry name" value="Periplasmic nitrate reductase"/>
    <property type="match status" value="1"/>
</dbReference>
<dbReference type="Gene3D" id="2.40.40.20">
    <property type="match status" value="1"/>
</dbReference>
<dbReference type="Gene3D" id="3.30.200.210">
    <property type="match status" value="1"/>
</dbReference>
<dbReference type="Gene3D" id="3.40.50.740">
    <property type="match status" value="2"/>
</dbReference>
<dbReference type="Gene3D" id="2.20.25.90">
    <property type="entry name" value="ADC-like domains"/>
    <property type="match status" value="1"/>
</dbReference>
<dbReference type="Gene3D" id="3.40.228.10">
    <property type="entry name" value="Dimethylsulfoxide Reductase, domain 2"/>
    <property type="match status" value="2"/>
</dbReference>
<dbReference type="HAMAP" id="MF_01630">
    <property type="entry name" value="Nitrate_reduct_NapA"/>
    <property type="match status" value="1"/>
</dbReference>
<dbReference type="InterPro" id="IPR009010">
    <property type="entry name" value="Asp_de-COase-like_dom_sf"/>
</dbReference>
<dbReference type="InterPro" id="IPR041957">
    <property type="entry name" value="CT_Nitrate-R-NapA-like"/>
</dbReference>
<dbReference type="InterPro" id="IPR006657">
    <property type="entry name" value="MoPterin_dinucl-bd_dom"/>
</dbReference>
<dbReference type="InterPro" id="IPR006656">
    <property type="entry name" value="Mopterin_OxRdtase"/>
</dbReference>
<dbReference type="InterPro" id="IPR006963">
    <property type="entry name" value="Mopterin_OxRdtase_4Fe-4S_dom"/>
</dbReference>
<dbReference type="InterPro" id="IPR027467">
    <property type="entry name" value="MopterinOxRdtase_cofactor_BS"/>
</dbReference>
<dbReference type="InterPro" id="IPR010051">
    <property type="entry name" value="Periplasm_NO3_reductase_lsu"/>
</dbReference>
<dbReference type="InterPro" id="IPR050123">
    <property type="entry name" value="Prok_molybdopt-oxidoreductase"/>
</dbReference>
<dbReference type="InterPro" id="IPR006311">
    <property type="entry name" value="TAT_signal"/>
</dbReference>
<dbReference type="InterPro" id="IPR019546">
    <property type="entry name" value="TAT_signal_bac_arc"/>
</dbReference>
<dbReference type="NCBIfam" id="TIGR01706">
    <property type="entry name" value="NAPA"/>
    <property type="match status" value="1"/>
</dbReference>
<dbReference type="NCBIfam" id="NF010055">
    <property type="entry name" value="PRK13532.1"/>
    <property type="match status" value="1"/>
</dbReference>
<dbReference type="NCBIfam" id="TIGR01409">
    <property type="entry name" value="TAT_signal_seq"/>
    <property type="match status" value="1"/>
</dbReference>
<dbReference type="PANTHER" id="PTHR43105:SF11">
    <property type="entry name" value="PERIPLASMIC NITRATE REDUCTASE"/>
    <property type="match status" value="1"/>
</dbReference>
<dbReference type="PANTHER" id="PTHR43105">
    <property type="entry name" value="RESPIRATORY NITRATE REDUCTASE"/>
    <property type="match status" value="1"/>
</dbReference>
<dbReference type="Pfam" id="PF04879">
    <property type="entry name" value="Molybdop_Fe4S4"/>
    <property type="match status" value="1"/>
</dbReference>
<dbReference type="Pfam" id="PF00384">
    <property type="entry name" value="Molybdopterin"/>
    <property type="match status" value="1"/>
</dbReference>
<dbReference type="Pfam" id="PF01568">
    <property type="entry name" value="Molydop_binding"/>
    <property type="match status" value="1"/>
</dbReference>
<dbReference type="SMART" id="SM00926">
    <property type="entry name" value="Molybdop_Fe4S4"/>
    <property type="match status" value="1"/>
</dbReference>
<dbReference type="SUPFAM" id="SSF50692">
    <property type="entry name" value="ADC-like"/>
    <property type="match status" value="1"/>
</dbReference>
<dbReference type="SUPFAM" id="SSF53706">
    <property type="entry name" value="Formate dehydrogenase/DMSO reductase, domains 1-3"/>
    <property type="match status" value="1"/>
</dbReference>
<dbReference type="PROSITE" id="PS51669">
    <property type="entry name" value="4FE4S_MOW_BIS_MGD"/>
    <property type="match status" value="1"/>
</dbReference>
<dbReference type="PROSITE" id="PS00551">
    <property type="entry name" value="MOLYBDOPTERIN_PROK_1"/>
    <property type="match status" value="1"/>
</dbReference>
<dbReference type="PROSITE" id="PS51318">
    <property type="entry name" value="TAT"/>
    <property type="match status" value="1"/>
</dbReference>
<evidence type="ECO:0000255" key="1">
    <source>
        <dbReference type="HAMAP-Rule" id="MF_01630"/>
    </source>
</evidence>
<proteinExistence type="inferred from homology"/>
<name>NAPA_CAMLR</name>
<feature type="signal peptide" description="Tat-type signal" evidence="1">
    <location>
        <begin position="1"/>
        <end position="29"/>
    </location>
</feature>
<feature type="chain" id="PRO_1000186351" description="Periplasmic nitrate reductase" evidence="1">
    <location>
        <begin position="30"/>
        <end position="924"/>
    </location>
</feature>
<feature type="domain" description="4Fe-4S Mo/W bis-MGD-type" evidence="1">
    <location>
        <begin position="35"/>
        <end position="91"/>
    </location>
</feature>
<feature type="binding site" evidence="1">
    <location>
        <position position="42"/>
    </location>
    <ligand>
        <name>[4Fe-4S] cluster</name>
        <dbReference type="ChEBI" id="CHEBI:49883"/>
    </ligand>
</feature>
<feature type="binding site" evidence="1">
    <location>
        <position position="45"/>
    </location>
    <ligand>
        <name>[4Fe-4S] cluster</name>
        <dbReference type="ChEBI" id="CHEBI:49883"/>
    </ligand>
</feature>
<feature type="binding site" evidence="1">
    <location>
        <position position="49"/>
    </location>
    <ligand>
        <name>[4Fe-4S] cluster</name>
        <dbReference type="ChEBI" id="CHEBI:49883"/>
    </ligand>
</feature>
<feature type="binding site" evidence="1">
    <location>
        <position position="77"/>
    </location>
    <ligand>
        <name>[4Fe-4S] cluster</name>
        <dbReference type="ChEBI" id="CHEBI:49883"/>
    </ligand>
</feature>
<feature type="binding site" evidence="1">
    <location>
        <position position="79"/>
    </location>
    <ligand>
        <name>Mo-bis(molybdopterin guanine dinucleotide)</name>
        <dbReference type="ChEBI" id="CHEBI:60539"/>
    </ligand>
</feature>
<feature type="binding site" evidence="1">
    <location>
        <position position="147"/>
    </location>
    <ligand>
        <name>Mo-bis(molybdopterin guanine dinucleotide)</name>
        <dbReference type="ChEBI" id="CHEBI:60539"/>
    </ligand>
</feature>
<feature type="binding site" evidence="1">
    <location>
        <position position="172"/>
    </location>
    <ligand>
        <name>Mo-bis(molybdopterin guanine dinucleotide)</name>
        <dbReference type="ChEBI" id="CHEBI:60539"/>
    </ligand>
</feature>
<feature type="binding site" evidence="1">
    <location>
        <position position="176"/>
    </location>
    <ligand>
        <name>Mo-bis(molybdopterin guanine dinucleotide)</name>
        <dbReference type="ChEBI" id="CHEBI:60539"/>
    </ligand>
</feature>
<feature type="binding site" evidence="1">
    <location>
        <begin position="209"/>
        <end position="216"/>
    </location>
    <ligand>
        <name>Mo-bis(molybdopterin guanine dinucleotide)</name>
        <dbReference type="ChEBI" id="CHEBI:60539"/>
    </ligand>
</feature>
<feature type="binding site" evidence="1">
    <location>
        <position position="417"/>
    </location>
    <ligand>
        <name>Mo-bis(molybdopterin guanine dinucleotide)</name>
        <dbReference type="ChEBI" id="CHEBI:60539"/>
    </ligand>
</feature>
<feature type="binding site" evidence="1">
    <location>
        <position position="421"/>
    </location>
    <ligand>
        <name>Mo-bis(molybdopterin guanine dinucleotide)</name>
        <dbReference type="ChEBI" id="CHEBI:60539"/>
    </ligand>
</feature>
<feature type="binding site" evidence="1">
    <location>
        <position position="527"/>
    </location>
    <ligand>
        <name>Mo-bis(molybdopterin guanine dinucleotide)</name>
        <dbReference type="ChEBI" id="CHEBI:60539"/>
    </ligand>
</feature>
<feature type="binding site" evidence="1">
    <location>
        <begin position="552"/>
        <end position="553"/>
    </location>
    <ligand>
        <name>Mo-bis(molybdopterin guanine dinucleotide)</name>
        <dbReference type="ChEBI" id="CHEBI:60539"/>
    </ligand>
</feature>
<feature type="binding site" evidence="1">
    <location>
        <position position="575"/>
    </location>
    <ligand>
        <name>Mo-bis(molybdopterin guanine dinucleotide)</name>
        <dbReference type="ChEBI" id="CHEBI:60539"/>
    </ligand>
</feature>
<feature type="binding site" evidence="1">
    <location>
        <position position="602"/>
    </location>
    <ligand>
        <name>Mo-bis(molybdopterin guanine dinucleotide)</name>
        <dbReference type="ChEBI" id="CHEBI:60539"/>
    </ligand>
</feature>
<feature type="binding site" evidence="1">
    <location>
        <begin position="814"/>
        <end position="823"/>
    </location>
    <ligand>
        <name>Mo-bis(molybdopterin guanine dinucleotide)</name>
        <dbReference type="ChEBI" id="CHEBI:60539"/>
    </ligand>
</feature>
<feature type="binding site" evidence="1">
    <location>
        <position position="890"/>
    </location>
    <ligand>
        <name>substrate</name>
    </ligand>
</feature>
<feature type="binding site" evidence="1">
    <location>
        <position position="898"/>
    </location>
    <ligand>
        <name>Mo-bis(molybdopterin guanine dinucleotide)</name>
        <dbReference type="ChEBI" id="CHEBI:60539"/>
    </ligand>
</feature>
<feature type="binding site" evidence="1">
    <location>
        <position position="915"/>
    </location>
    <ligand>
        <name>Mo-bis(molybdopterin guanine dinucleotide)</name>
        <dbReference type="ChEBI" id="CHEBI:60539"/>
    </ligand>
</feature>
<organism>
    <name type="scientific">Campylobacter lari (strain RM2100 / D67 / ATCC BAA-1060)</name>
    <dbReference type="NCBI Taxonomy" id="306263"/>
    <lineage>
        <taxon>Bacteria</taxon>
        <taxon>Pseudomonadati</taxon>
        <taxon>Campylobacterota</taxon>
        <taxon>Epsilonproteobacteria</taxon>
        <taxon>Campylobacterales</taxon>
        <taxon>Campylobacteraceae</taxon>
        <taxon>Campylobacter</taxon>
    </lineage>
</organism>
<sequence>MNRRDFIKNTAIASACGVAGLSVPSSVLANTENKWRWDKAVCRFCGTGCGILVARQDGKIVAVKGDPAAPVNRGLNCIKGYFNAKIMYGEDRLVTPLLRVNAKGEFDKNGKFQQVSWQRAFDEMEKHFKKAYKEKGVEGIGIFASGQYTIQEGYAAAKLVKAGFRSNNIDPNARHCMASAVVGFMQTFGVDEPSGCYDDIELTDTIITWGANMAEMHPILWSRVSDRKLSNLDKVKIVNLSTFSNRTSHIADTEIIFKPNTDLAIWNYIAREIVYNHPEAMDKEFVEKHCIFTTGYADIGYGMRNNPNHPKFKASEKDTVAKQNSIILDDEEAVSLAYLGVKAGDKFEMKHQSAPDAHWEISFEDFKKALEPYTLDYVAKVAKGNEDESIEEFKKKLQELANLYIEKNRKVVSFWTMGFNQHTRGSWVNEQAYMVHFLLGKQAKPGSGAFSLTGQPSACGTAREVGTFSHRLPADMVVANPKHREISEKIWKVPAKTINPKPGAPYLKIMRDLEDGNIKFAWVQVNNPWQNTANANHWIAAAREMDNFIVVSDCYPGISAKVADLILPSAMIYEKWGAYGNAERRTQHWKQQVLPVGEAMSDTWQILEFAKRFKLKEVWGETKVDDKLTLPSILEEAKAMGYNEDDTLYDVLFANKEAKSFKANDPIAKGFDNSDVNGDERKIIGSDGKEFDGYGFFVQKYLWEEYRKFGLGHGHDLADFDTYHKVRGLRWPVVNGKETQWRFNTKFDYYAKKAAPNSDFAFYGAFAKELPKGDLIAPQTQEKYSLKNKAKIFFRPFMKAPERPSEEYPFWLCTGRVLEHWHSGTMTMRVPELFRAVPEALCYMNEDDAKKMQIAQGDIVWVESRRGKVKARVDFRGRNKPSKGLVYVPWFDENVYINKVTLDATCPLSNQTDFKKCAVKITKA</sequence>
<protein>
    <recommendedName>
        <fullName evidence="1">Periplasmic nitrate reductase</fullName>
        <ecNumber evidence="1">1.9.6.1</ecNumber>
    </recommendedName>
</protein>
<reference key="1">
    <citation type="journal article" date="2008" name="Foodborne Pathog. Dis.">
        <title>The complete genome sequence and analysis of the human pathogen Campylobacter lari.</title>
        <authorList>
            <person name="Miller W.G."/>
            <person name="Wang G."/>
            <person name="Binnewies T.T."/>
            <person name="Parker C.T."/>
        </authorList>
    </citation>
    <scope>NUCLEOTIDE SEQUENCE [LARGE SCALE GENOMIC DNA]</scope>
    <source>
        <strain>RM2100 / D67 / ATCC BAA-1060</strain>
    </source>
</reference>
<accession>B9KCQ2</accession>